<feature type="chain" id="PRO_0000359508" description="Alkyl hydroperoxide reductase AhpD">
    <location>
        <begin position="1"/>
        <end position="177"/>
    </location>
</feature>
<feature type="active site" description="Proton donor" evidence="2">
    <location>
        <position position="131"/>
    </location>
</feature>
<feature type="active site" description="Cysteine sulfenic acid (-SOH) intermediate" evidence="2">
    <location>
        <position position="134"/>
    </location>
</feature>
<feature type="disulfide bond" evidence="1">
    <location>
        <begin position="131"/>
        <end position="134"/>
    </location>
</feature>
<feature type="disulfide bond" description="Interchain (with AhpC); in linked form" evidence="2">
    <location>
        <position position="134"/>
    </location>
</feature>
<accession>Q82IC5</accession>
<reference key="1">
    <citation type="journal article" date="2003" name="Nat. Biotechnol.">
        <title>Complete genome sequence and comparative analysis of the industrial microorganism Streptomyces avermitilis.</title>
        <authorList>
            <person name="Ikeda H."/>
            <person name="Ishikawa J."/>
            <person name="Hanamoto A."/>
            <person name="Shinose M."/>
            <person name="Kikuchi H."/>
            <person name="Shiba T."/>
            <person name="Sakaki Y."/>
            <person name="Hattori M."/>
            <person name="Omura S."/>
        </authorList>
    </citation>
    <scope>NUCLEOTIDE SEQUENCE [LARGE SCALE GENOMIC DNA]</scope>
    <source>
        <strain>ATCC 31267 / DSM 46492 / JCM 5070 / NBRC 14893 / NCIMB 12804 / NRRL 8165 / MA-4680</strain>
    </source>
</reference>
<reference key="2">
    <citation type="journal article" date="2001" name="Proc. Natl. Acad. Sci. U.S.A.">
        <title>Genome sequence of an industrial microorganism Streptomyces avermitilis: deducing the ability of producing secondary metabolites.</title>
        <authorList>
            <person name="Omura S."/>
            <person name="Ikeda H."/>
            <person name="Ishikawa J."/>
            <person name="Hanamoto A."/>
            <person name="Takahashi C."/>
            <person name="Shinose M."/>
            <person name="Takahashi Y."/>
            <person name="Horikawa H."/>
            <person name="Nakazawa H."/>
            <person name="Osonoe T."/>
            <person name="Kikuchi H."/>
            <person name="Shiba T."/>
            <person name="Sakaki Y."/>
            <person name="Hattori M."/>
        </authorList>
    </citation>
    <scope>NUCLEOTIDE SEQUENCE [LARGE SCALE GENOMIC DNA]</scope>
    <source>
        <strain>ATCC 31267 / DSM 46492 / JCM 5070 / NBRC 14893 / NCIMB 12804 / NRRL 8165 / MA-4680</strain>
    </source>
</reference>
<comment type="function">
    <text evidence="2">Antioxidant protein with alkyl hydroperoxidase activity. Required for the reduction of the AhpC active site cysteine residues and for the regeneration of the AhpC enzyme activity.</text>
</comment>
<comment type="catalytic activity">
    <reaction evidence="2">
        <text>N(6)-[(R)-dihydrolipoyl]-L-lysyl-[lipoyl-carrier protein] + a hydroperoxide = N(6)-[(R)-lipoyl]-L-lysyl-[lipoyl-carrier protein] + an alcohol + H2O</text>
        <dbReference type="Rhea" id="RHEA:62636"/>
        <dbReference type="Rhea" id="RHEA-COMP:10502"/>
        <dbReference type="Rhea" id="RHEA-COMP:16355"/>
        <dbReference type="ChEBI" id="CHEBI:15377"/>
        <dbReference type="ChEBI" id="CHEBI:30879"/>
        <dbReference type="ChEBI" id="CHEBI:35924"/>
        <dbReference type="ChEBI" id="CHEBI:83099"/>
        <dbReference type="ChEBI" id="CHEBI:83100"/>
        <dbReference type="EC" id="1.11.1.28"/>
    </reaction>
</comment>
<comment type="subunit">
    <text evidence="2">Homotrimer.</text>
</comment>
<comment type="similarity">
    <text evidence="2">Belongs to the AhpD family.</text>
</comment>
<name>AHPD_STRAW</name>
<dbReference type="EC" id="1.11.1.28" evidence="2"/>
<dbReference type="EMBL" id="BA000030">
    <property type="protein sequence ID" value="BAC70944.1"/>
    <property type="molecule type" value="Genomic_DNA"/>
</dbReference>
<dbReference type="RefSeq" id="WP_010984663.1">
    <property type="nucleotide sequence ID" value="NZ_JZJK01000090.1"/>
</dbReference>
<dbReference type="SMR" id="Q82IC5"/>
<dbReference type="PeroxiBase" id="4600">
    <property type="entry name" value="SavAhpD"/>
</dbReference>
<dbReference type="GeneID" id="41540307"/>
<dbReference type="KEGG" id="sma:SAVERM_3233"/>
<dbReference type="eggNOG" id="COG2128">
    <property type="taxonomic scope" value="Bacteria"/>
</dbReference>
<dbReference type="HOGENOM" id="CLU_105328_0_0_11"/>
<dbReference type="OrthoDB" id="9801997at2"/>
<dbReference type="Proteomes" id="UP000000428">
    <property type="component" value="Chromosome"/>
</dbReference>
<dbReference type="GO" id="GO:0008785">
    <property type="term" value="F:alkyl hydroperoxide reductase activity"/>
    <property type="evidence" value="ECO:0007669"/>
    <property type="project" value="UniProtKB-UniRule"/>
</dbReference>
<dbReference type="GO" id="GO:0015036">
    <property type="term" value="F:disulfide oxidoreductase activity"/>
    <property type="evidence" value="ECO:0007669"/>
    <property type="project" value="TreeGrafter"/>
</dbReference>
<dbReference type="GO" id="GO:0032843">
    <property type="term" value="F:hydroperoxide reductase activity"/>
    <property type="evidence" value="ECO:0007669"/>
    <property type="project" value="InterPro"/>
</dbReference>
<dbReference type="GO" id="GO:0051920">
    <property type="term" value="F:peroxiredoxin activity"/>
    <property type="evidence" value="ECO:0007669"/>
    <property type="project" value="InterPro"/>
</dbReference>
<dbReference type="GO" id="GO:0045454">
    <property type="term" value="P:cell redox homeostasis"/>
    <property type="evidence" value="ECO:0007669"/>
    <property type="project" value="TreeGrafter"/>
</dbReference>
<dbReference type="GO" id="GO:0006979">
    <property type="term" value="P:response to oxidative stress"/>
    <property type="evidence" value="ECO:0007669"/>
    <property type="project" value="InterPro"/>
</dbReference>
<dbReference type="Gene3D" id="1.20.1290.10">
    <property type="entry name" value="AhpD-like"/>
    <property type="match status" value="1"/>
</dbReference>
<dbReference type="HAMAP" id="MF_01676">
    <property type="entry name" value="AhpD"/>
    <property type="match status" value="1"/>
</dbReference>
<dbReference type="InterPro" id="IPR004674">
    <property type="entry name" value="AhpD"/>
</dbReference>
<dbReference type="InterPro" id="IPR029032">
    <property type="entry name" value="AhpD-like"/>
</dbReference>
<dbReference type="InterPro" id="IPR004675">
    <property type="entry name" value="AhpD_core"/>
</dbReference>
<dbReference type="InterPro" id="IPR003779">
    <property type="entry name" value="CMD-like"/>
</dbReference>
<dbReference type="NCBIfam" id="TIGR00777">
    <property type="entry name" value="ahpD"/>
    <property type="match status" value="1"/>
</dbReference>
<dbReference type="NCBIfam" id="TIGR00778">
    <property type="entry name" value="ahpD_dom"/>
    <property type="match status" value="1"/>
</dbReference>
<dbReference type="PANTHER" id="PTHR33930">
    <property type="entry name" value="ALKYL HYDROPEROXIDE REDUCTASE AHPD"/>
    <property type="match status" value="1"/>
</dbReference>
<dbReference type="PANTHER" id="PTHR33930:SF7">
    <property type="entry name" value="ALKYL HYDROPEROXIDE REDUCTASE AHPD"/>
    <property type="match status" value="1"/>
</dbReference>
<dbReference type="Pfam" id="PF02627">
    <property type="entry name" value="CMD"/>
    <property type="match status" value="1"/>
</dbReference>
<dbReference type="SUPFAM" id="SSF69118">
    <property type="entry name" value="AhpD-like"/>
    <property type="match status" value="1"/>
</dbReference>
<evidence type="ECO:0000250" key="1"/>
<evidence type="ECO:0000255" key="2">
    <source>
        <dbReference type="HAMAP-Rule" id="MF_01676"/>
    </source>
</evidence>
<gene>
    <name evidence="2" type="primary">ahpD</name>
    <name type="ordered locus">SAV_3233</name>
</gene>
<keyword id="KW-0049">Antioxidant</keyword>
<keyword id="KW-1015">Disulfide bond</keyword>
<keyword id="KW-0560">Oxidoreductase</keyword>
<keyword id="KW-0575">Peroxidase</keyword>
<keyword id="KW-0676">Redox-active center</keyword>
<keyword id="KW-1185">Reference proteome</keyword>
<proteinExistence type="inferred from homology"/>
<sequence length="177" mass="19022">MALDELKAAVPDYAKDLRLNLGSVIGNSDLPQQQLWGTVLACAIASRSPRVLRELEPQAKANLSPEAYTAAKSAAAIMAMNNVFYRTRHLLSDPEYGTLRAGLRMNVIGNPGVEKVDFELWSLAVSAVNGCGQCLDSHEQVLRKAGVDRDTIQEAFKIAAVIQAVGTTLDAEAVLAE</sequence>
<protein>
    <recommendedName>
        <fullName evidence="2">Alkyl hydroperoxide reductase AhpD</fullName>
        <ecNumber evidence="2">1.11.1.28</ecNumber>
    </recommendedName>
    <alternativeName>
        <fullName evidence="2">Alkylhydroperoxidase AhpD</fullName>
    </alternativeName>
</protein>
<organism>
    <name type="scientific">Streptomyces avermitilis (strain ATCC 31267 / DSM 46492 / JCM 5070 / NBRC 14893 / NCIMB 12804 / NRRL 8165 / MA-4680)</name>
    <dbReference type="NCBI Taxonomy" id="227882"/>
    <lineage>
        <taxon>Bacteria</taxon>
        <taxon>Bacillati</taxon>
        <taxon>Actinomycetota</taxon>
        <taxon>Actinomycetes</taxon>
        <taxon>Kitasatosporales</taxon>
        <taxon>Streptomycetaceae</taxon>
        <taxon>Streptomyces</taxon>
    </lineage>
</organism>